<proteinExistence type="inferred from homology"/>
<feature type="chain" id="PRO_1000006114" description="Elongation factor Ts">
    <location>
        <begin position="1"/>
        <end position="341"/>
    </location>
</feature>
<feature type="region of interest" description="Involved in Mg(2+) ion dislocation from EF-Tu" evidence="1">
    <location>
        <begin position="80"/>
        <end position="83"/>
    </location>
</feature>
<evidence type="ECO:0000255" key="1">
    <source>
        <dbReference type="HAMAP-Rule" id="MF_00050"/>
    </source>
</evidence>
<reference key="1">
    <citation type="journal article" date="2006" name="Proc. Natl. Acad. Sci. U.S.A.">
        <title>Comparative genomics of the lactic acid bacteria.</title>
        <authorList>
            <person name="Makarova K.S."/>
            <person name="Slesarev A."/>
            <person name="Wolf Y.I."/>
            <person name="Sorokin A."/>
            <person name="Mirkin B."/>
            <person name="Koonin E.V."/>
            <person name="Pavlov A."/>
            <person name="Pavlova N."/>
            <person name="Karamychev V."/>
            <person name="Polouchine N."/>
            <person name="Shakhova V."/>
            <person name="Grigoriev I."/>
            <person name="Lou Y."/>
            <person name="Rohksar D."/>
            <person name="Lucas S."/>
            <person name="Huang K."/>
            <person name="Goodstein D.M."/>
            <person name="Hawkins T."/>
            <person name="Plengvidhya V."/>
            <person name="Welker D."/>
            <person name="Hughes J."/>
            <person name="Goh Y."/>
            <person name="Benson A."/>
            <person name="Baldwin K."/>
            <person name="Lee J.-H."/>
            <person name="Diaz-Muniz I."/>
            <person name="Dosti B."/>
            <person name="Smeianov V."/>
            <person name="Wechter W."/>
            <person name="Barabote R."/>
            <person name="Lorca G."/>
            <person name="Altermann E."/>
            <person name="Barrangou R."/>
            <person name="Ganesan B."/>
            <person name="Xie Y."/>
            <person name="Rawsthorne H."/>
            <person name="Tamir D."/>
            <person name="Parker C."/>
            <person name="Breidt F."/>
            <person name="Broadbent J.R."/>
            <person name="Hutkins R."/>
            <person name="O'Sullivan D."/>
            <person name="Steele J."/>
            <person name="Unlu G."/>
            <person name="Saier M.H. Jr."/>
            <person name="Klaenhammer T."/>
            <person name="Richardson P."/>
            <person name="Kozyavkin S."/>
            <person name="Weimer B.C."/>
            <person name="Mills D.A."/>
        </authorList>
    </citation>
    <scope>NUCLEOTIDE SEQUENCE [LARGE SCALE GENOMIC DNA]</scope>
    <source>
        <strain>ATCC 33323 / DSM 20243 / BCRC 14619 / CIP 102991 / JCM 1131 / KCTC 3163 / NCIMB 11718 / NCTC 13722 / AM63</strain>
    </source>
</reference>
<organism>
    <name type="scientific">Lactobacillus gasseri (strain ATCC 33323 / DSM 20243 / BCRC 14619 / CIP 102991 / JCM 1131 / KCTC 3163 / NCIMB 11718 / NCTC 13722 / AM63)</name>
    <dbReference type="NCBI Taxonomy" id="324831"/>
    <lineage>
        <taxon>Bacteria</taxon>
        <taxon>Bacillati</taxon>
        <taxon>Bacillota</taxon>
        <taxon>Bacilli</taxon>
        <taxon>Lactobacillales</taxon>
        <taxon>Lactobacillaceae</taxon>
        <taxon>Lactobacillus</taxon>
    </lineage>
</organism>
<keyword id="KW-0963">Cytoplasm</keyword>
<keyword id="KW-0251">Elongation factor</keyword>
<keyword id="KW-0648">Protein biosynthesis</keyword>
<gene>
    <name evidence="1" type="primary">tsf</name>
    <name type="ordered locus">LGAS_0802</name>
</gene>
<accession>Q044C9</accession>
<sequence>MAKITAQLVKELRERTGAGVMDAKKALVEVDGDMDKAVQYLRDKGMAKAAKKADRVAAEGLTGVYVDGNVAAITEVNSETDFVSSNDKFVNLVNAATKTIAEGKPANMEAAEELKMADGTTLAQSFVDATATIGEKIVLRRFALEEKTDDQEFGAYQHNGGQIGVITVLEGADAATAKHLAMHIAAMSPKVISPEELDDDFITDQLAVMNHKIDQDNESRALVNKKPLPYLVYGSEKQLSDEILAKAKEDIKAELKEEGKPEKIWDKIIPGKMQRFIDDNTQVDKQFAVLSQNYIMDDSKTVGEFLKEKGAKLVAFQRYEVGEGIEKKQEDFAAEVREQMK</sequence>
<comment type="function">
    <text evidence="1">Associates with the EF-Tu.GDP complex and induces the exchange of GDP to GTP. It remains bound to the aminoacyl-tRNA.EF-Tu.GTP complex up to the GTP hydrolysis stage on the ribosome.</text>
</comment>
<comment type="subcellular location">
    <subcellularLocation>
        <location evidence="1">Cytoplasm</location>
    </subcellularLocation>
</comment>
<comment type="similarity">
    <text evidence="1">Belongs to the EF-Ts family.</text>
</comment>
<protein>
    <recommendedName>
        <fullName evidence="1">Elongation factor Ts</fullName>
        <shortName evidence="1">EF-Ts</shortName>
    </recommendedName>
</protein>
<name>EFTS_LACGA</name>
<dbReference type="EMBL" id="CP000413">
    <property type="protein sequence ID" value="ABJ60193.1"/>
    <property type="molecule type" value="Genomic_DNA"/>
</dbReference>
<dbReference type="RefSeq" id="WP_011678871.1">
    <property type="nucleotide sequence ID" value="NZ_WBMG01000005.1"/>
</dbReference>
<dbReference type="SMR" id="Q044C9"/>
<dbReference type="GeneID" id="29640050"/>
<dbReference type="KEGG" id="lga:LGAS_0802"/>
<dbReference type="HOGENOM" id="CLU_047155_0_1_9"/>
<dbReference type="BioCyc" id="LGAS324831:G1G6Y-796-MONOMER"/>
<dbReference type="Proteomes" id="UP000000664">
    <property type="component" value="Chromosome"/>
</dbReference>
<dbReference type="GO" id="GO:0005737">
    <property type="term" value="C:cytoplasm"/>
    <property type="evidence" value="ECO:0007669"/>
    <property type="project" value="UniProtKB-SubCell"/>
</dbReference>
<dbReference type="GO" id="GO:0003746">
    <property type="term" value="F:translation elongation factor activity"/>
    <property type="evidence" value="ECO:0007669"/>
    <property type="project" value="UniProtKB-UniRule"/>
</dbReference>
<dbReference type="CDD" id="cd14275">
    <property type="entry name" value="UBA_EF-Ts"/>
    <property type="match status" value="1"/>
</dbReference>
<dbReference type="FunFam" id="1.10.286.20:FF:000004">
    <property type="entry name" value="Elongation factor Ts"/>
    <property type="match status" value="1"/>
</dbReference>
<dbReference type="FunFam" id="1.10.8.10:FF:000001">
    <property type="entry name" value="Elongation factor Ts"/>
    <property type="match status" value="1"/>
</dbReference>
<dbReference type="Gene3D" id="1.10.286.20">
    <property type="match status" value="1"/>
</dbReference>
<dbReference type="Gene3D" id="1.10.8.10">
    <property type="entry name" value="DNA helicase RuvA subunit, C-terminal domain"/>
    <property type="match status" value="1"/>
</dbReference>
<dbReference type="Gene3D" id="3.30.479.20">
    <property type="entry name" value="Elongation factor Ts, dimerisation domain"/>
    <property type="match status" value="2"/>
</dbReference>
<dbReference type="HAMAP" id="MF_00050">
    <property type="entry name" value="EF_Ts"/>
    <property type="match status" value="1"/>
</dbReference>
<dbReference type="InterPro" id="IPR036402">
    <property type="entry name" value="EF-Ts_dimer_sf"/>
</dbReference>
<dbReference type="InterPro" id="IPR001816">
    <property type="entry name" value="Transl_elong_EFTs/EF1B"/>
</dbReference>
<dbReference type="InterPro" id="IPR014039">
    <property type="entry name" value="Transl_elong_EFTs/EF1B_dimer"/>
</dbReference>
<dbReference type="InterPro" id="IPR018101">
    <property type="entry name" value="Transl_elong_Ts_CS"/>
</dbReference>
<dbReference type="InterPro" id="IPR009060">
    <property type="entry name" value="UBA-like_sf"/>
</dbReference>
<dbReference type="NCBIfam" id="TIGR00116">
    <property type="entry name" value="tsf"/>
    <property type="match status" value="1"/>
</dbReference>
<dbReference type="PANTHER" id="PTHR11741">
    <property type="entry name" value="ELONGATION FACTOR TS"/>
    <property type="match status" value="1"/>
</dbReference>
<dbReference type="PANTHER" id="PTHR11741:SF0">
    <property type="entry name" value="ELONGATION FACTOR TS, MITOCHONDRIAL"/>
    <property type="match status" value="1"/>
</dbReference>
<dbReference type="Pfam" id="PF00889">
    <property type="entry name" value="EF_TS"/>
    <property type="match status" value="2"/>
</dbReference>
<dbReference type="SUPFAM" id="SSF54713">
    <property type="entry name" value="Elongation factor Ts (EF-Ts), dimerisation domain"/>
    <property type="match status" value="2"/>
</dbReference>
<dbReference type="SUPFAM" id="SSF46934">
    <property type="entry name" value="UBA-like"/>
    <property type="match status" value="1"/>
</dbReference>
<dbReference type="PROSITE" id="PS01126">
    <property type="entry name" value="EF_TS_1"/>
    <property type="match status" value="1"/>
</dbReference>
<dbReference type="PROSITE" id="PS01127">
    <property type="entry name" value="EF_TS_2"/>
    <property type="match status" value="1"/>
</dbReference>